<reference key="1">
    <citation type="journal article" date="2011" name="J. Bacteriol.">
        <title>Comparative genomics of 28 Salmonella enterica isolates: evidence for CRISPR-mediated adaptive sublineage evolution.</title>
        <authorList>
            <person name="Fricke W.F."/>
            <person name="Mammel M.K."/>
            <person name="McDermott P.F."/>
            <person name="Tartera C."/>
            <person name="White D.G."/>
            <person name="Leclerc J.E."/>
            <person name="Ravel J."/>
            <person name="Cebula T.A."/>
        </authorList>
    </citation>
    <scope>NUCLEOTIDE SEQUENCE [LARGE SCALE GENOMIC DNA]</scope>
    <source>
        <strain>SL483</strain>
    </source>
</reference>
<proteinExistence type="inferred from homology"/>
<sequence length="290" mass="32602">MEWSLTQSKLLAFHRLMRTDKPIGALLLLWPTLWALWVATPGMPQLWILAVFVAGVWLMRAAGCVVNDYADRKFDGHVKRTVNRPLPSGAVTEKEARNLFVVLVLLAFLLVLTLNAMTILLSVAALALAWVYPFMKRYTHLPQVVLGAAFGWSIPMAFAAVSESLPLSCWLMFLANILWAVAYDTQYAMVDRDDDIKIGIKSTAILFGRYDTLIIGILQLGVMALMALIGWLNGLGWGYYWAVLVAGALFVYQQKLIANREREACFKAFMNNNYVGLVLFLGLAMSYWHF</sequence>
<feature type="chain" id="PRO_1000186681" description="4-hydroxybenzoate octaprenyltransferase">
    <location>
        <begin position="1"/>
        <end position="290"/>
    </location>
</feature>
<feature type="transmembrane region" description="Helical" evidence="1">
    <location>
        <begin position="23"/>
        <end position="43"/>
    </location>
</feature>
<feature type="transmembrane region" description="Helical" evidence="1">
    <location>
        <begin position="46"/>
        <end position="66"/>
    </location>
</feature>
<feature type="transmembrane region" description="Helical" evidence="1">
    <location>
        <begin position="99"/>
        <end position="119"/>
    </location>
</feature>
<feature type="transmembrane region" description="Helical" evidence="1">
    <location>
        <begin position="141"/>
        <end position="161"/>
    </location>
</feature>
<feature type="transmembrane region" description="Helical" evidence="1">
    <location>
        <begin position="163"/>
        <end position="183"/>
    </location>
</feature>
<feature type="transmembrane region" description="Helical" evidence="1">
    <location>
        <begin position="212"/>
        <end position="232"/>
    </location>
</feature>
<feature type="transmembrane region" description="Helical" evidence="1">
    <location>
        <begin position="233"/>
        <end position="253"/>
    </location>
</feature>
<feature type="transmembrane region" description="Helical" evidence="1">
    <location>
        <begin position="268"/>
        <end position="288"/>
    </location>
</feature>
<dbReference type="EC" id="2.5.1.39" evidence="1"/>
<dbReference type="EMBL" id="CP001138">
    <property type="protein sequence ID" value="ACH50510.1"/>
    <property type="molecule type" value="Genomic_DNA"/>
</dbReference>
<dbReference type="RefSeq" id="WP_000455249.1">
    <property type="nucleotide sequence ID" value="NC_011149.1"/>
</dbReference>
<dbReference type="SMR" id="B5F1Q3"/>
<dbReference type="KEGG" id="sea:SeAg_B4491"/>
<dbReference type="HOGENOM" id="CLU_034879_1_0_6"/>
<dbReference type="UniPathway" id="UPA00232"/>
<dbReference type="Proteomes" id="UP000008819">
    <property type="component" value="Chromosome"/>
</dbReference>
<dbReference type="GO" id="GO:0005886">
    <property type="term" value="C:plasma membrane"/>
    <property type="evidence" value="ECO:0007669"/>
    <property type="project" value="UniProtKB-SubCell"/>
</dbReference>
<dbReference type="GO" id="GO:0008412">
    <property type="term" value="F:4-hydroxybenzoate polyprenyltransferase activity"/>
    <property type="evidence" value="ECO:0007669"/>
    <property type="project" value="UniProtKB-UniRule"/>
</dbReference>
<dbReference type="GO" id="GO:0006744">
    <property type="term" value="P:ubiquinone biosynthetic process"/>
    <property type="evidence" value="ECO:0007669"/>
    <property type="project" value="UniProtKB-UniRule"/>
</dbReference>
<dbReference type="CDD" id="cd13959">
    <property type="entry name" value="PT_UbiA_COQ2"/>
    <property type="match status" value="1"/>
</dbReference>
<dbReference type="FunFam" id="1.10.357.140:FF:000002">
    <property type="entry name" value="4-hydroxybenzoate octaprenyltransferase"/>
    <property type="match status" value="1"/>
</dbReference>
<dbReference type="FunFam" id="1.20.120.1780:FF:000001">
    <property type="entry name" value="4-hydroxybenzoate octaprenyltransferase"/>
    <property type="match status" value="1"/>
</dbReference>
<dbReference type="Gene3D" id="1.10.357.140">
    <property type="entry name" value="UbiA prenyltransferase"/>
    <property type="match status" value="1"/>
</dbReference>
<dbReference type="Gene3D" id="1.20.120.1780">
    <property type="entry name" value="UbiA prenyltransferase"/>
    <property type="match status" value="1"/>
</dbReference>
<dbReference type="HAMAP" id="MF_01635">
    <property type="entry name" value="UbiA"/>
    <property type="match status" value="1"/>
</dbReference>
<dbReference type="InterPro" id="IPR006370">
    <property type="entry name" value="HB_polyprenyltransferase-like"/>
</dbReference>
<dbReference type="InterPro" id="IPR039653">
    <property type="entry name" value="Prenyltransferase"/>
</dbReference>
<dbReference type="InterPro" id="IPR000537">
    <property type="entry name" value="UbiA_prenyltransferase"/>
</dbReference>
<dbReference type="InterPro" id="IPR030470">
    <property type="entry name" value="UbiA_prenylTrfase_CS"/>
</dbReference>
<dbReference type="InterPro" id="IPR044878">
    <property type="entry name" value="UbiA_sf"/>
</dbReference>
<dbReference type="NCBIfam" id="TIGR01474">
    <property type="entry name" value="ubiA_proteo"/>
    <property type="match status" value="1"/>
</dbReference>
<dbReference type="PANTHER" id="PTHR11048:SF28">
    <property type="entry name" value="4-HYDROXYBENZOATE POLYPRENYLTRANSFERASE, MITOCHONDRIAL"/>
    <property type="match status" value="1"/>
</dbReference>
<dbReference type="PANTHER" id="PTHR11048">
    <property type="entry name" value="PRENYLTRANSFERASES"/>
    <property type="match status" value="1"/>
</dbReference>
<dbReference type="Pfam" id="PF01040">
    <property type="entry name" value="UbiA"/>
    <property type="match status" value="1"/>
</dbReference>
<dbReference type="PROSITE" id="PS00943">
    <property type="entry name" value="UBIA"/>
    <property type="match status" value="1"/>
</dbReference>
<keyword id="KW-0997">Cell inner membrane</keyword>
<keyword id="KW-1003">Cell membrane</keyword>
<keyword id="KW-0460">Magnesium</keyword>
<keyword id="KW-0472">Membrane</keyword>
<keyword id="KW-0808">Transferase</keyword>
<keyword id="KW-0812">Transmembrane</keyword>
<keyword id="KW-1133">Transmembrane helix</keyword>
<keyword id="KW-0831">Ubiquinone biosynthesis</keyword>
<gene>
    <name evidence="1" type="primary">ubiA</name>
    <name type="ordered locus">SeAg_B4491</name>
</gene>
<accession>B5F1Q3</accession>
<protein>
    <recommendedName>
        <fullName evidence="1">4-hydroxybenzoate octaprenyltransferase</fullName>
        <ecNumber evidence="1">2.5.1.39</ecNumber>
    </recommendedName>
    <alternativeName>
        <fullName evidence="1">4-HB polyprenyltransferase</fullName>
    </alternativeName>
</protein>
<organism>
    <name type="scientific">Salmonella agona (strain SL483)</name>
    <dbReference type="NCBI Taxonomy" id="454166"/>
    <lineage>
        <taxon>Bacteria</taxon>
        <taxon>Pseudomonadati</taxon>
        <taxon>Pseudomonadota</taxon>
        <taxon>Gammaproteobacteria</taxon>
        <taxon>Enterobacterales</taxon>
        <taxon>Enterobacteriaceae</taxon>
        <taxon>Salmonella</taxon>
    </lineage>
</organism>
<comment type="function">
    <text evidence="1">Catalyzes the prenylation of para-hydroxybenzoate (PHB) with an all-trans polyprenyl group. Mediates the second step in the final reaction sequence of ubiquinone-8 (UQ-8) biosynthesis, which is the condensation of the polyisoprenoid side chain with PHB, generating the first membrane-bound Q intermediate 3-octaprenyl-4-hydroxybenzoate.</text>
</comment>
<comment type="catalytic activity">
    <reaction evidence="1">
        <text>all-trans-octaprenyl diphosphate + 4-hydroxybenzoate = 4-hydroxy-3-(all-trans-octaprenyl)benzoate + diphosphate</text>
        <dbReference type="Rhea" id="RHEA:27782"/>
        <dbReference type="ChEBI" id="CHEBI:1617"/>
        <dbReference type="ChEBI" id="CHEBI:17879"/>
        <dbReference type="ChEBI" id="CHEBI:33019"/>
        <dbReference type="ChEBI" id="CHEBI:57711"/>
        <dbReference type="EC" id="2.5.1.39"/>
    </reaction>
</comment>
<comment type="cofactor">
    <cofactor evidence="1">
        <name>Mg(2+)</name>
        <dbReference type="ChEBI" id="CHEBI:18420"/>
    </cofactor>
</comment>
<comment type="pathway">
    <text evidence="1">Cofactor biosynthesis; ubiquinone biosynthesis.</text>
</comment>
<comment type="subcellular location">
    <subcellularLocation>
        <location evidence="1">Cell inner membrane</location>
        <topology evidence="1">Multi-pass membrane protein</topology>
    </subcellularLocation>
</comment>
<comment type="similarity">
    <text evidence="1">Belongs to the UbiA prenyltransferase family.</text>
</comment>
<evidence type="ECO:0000255" key="1">
    <source>
        <dbReference type="HAMAP-Rule" id="MF_01635"/>
    </source>
</evidence>
<name>UBIA_SALA4</name>